<proteinExistence type="evidence at protein level"/>
<feature type="signal peptide" evidence="3">
    <location>
        <begin position="1"/>
        <end position="28"/>
    </location>
</feature>
<feature type="peptide" id="PRO_0000035349" description="Potassium channel toxin alpha-KTx 9.1" evidence="3">
    <location>
        <begin position="29"/>
        <end position="56"/>
    </location>
</feature>
<feature type="disulfide bond" evidence="1 11">
    <location>
        <begin position="31"/>
        <end position="47"/>
    </location>
</feature>
<feature type="disulfide bond" evidence="1 11">
    <location>
        <begin position="34"/>
        <end position="52"/>
    </location>
</feature>
<feature type="disulfide bond" evidence="1 11">
    <location>
        <begin position="38"/>
        <end position="54"/>
    </location>
</feature>
<feature type="helix" evidence="12">
    <location>
        <begin position="34"/>
        <end position="37"/>
    </location>
</feature>
<feature type="strand" evidence="12">
    <location>
        <begin position="40"/>
        <end position="42"/>
    </location>
</feature>
<feature type="strand" evidence="12">
    <location>
        <begin position="45"/>
        <end position="48"/>
    </location>
</feature>
<feature type="strand" evidence="12">
    <location>
        <begin position="51"/>
        <end position="54"/>
    </location>
</feature>
<dbReference type="EMBL" id="AF132975">
    <property type="protein sequence ID" value="AAF31296.1"/>
    <property type="molecule type" value="mRNA"/>
</dbReference>
<dbReference type="EMBL" id="AF154633">
    <property type="protein sequence ID" value="AAP43906.1"/>
    <property type="molecule type" value="mRNA"/>
</dbReference>
<dbReference type="PDB" id="1DU9">
    <property type="method" value="NMR"/>
    <property type="chains" value="A=29-56"/>
</dbReference>
<dbReference type="PDBsum" id="1DU9"/>
<dbReference type="BMRB" id="Q9NJP7"/>
<dbReference type="SMR" id="Q9NJP7"/>
<dbReference type="EvolutionaryTrace" id="Q9NJP7"/>
<dbReference type="GO" id="GO:0005576">
    <property type="term" value="C:extracellular region"/>
    <property type="evidence" value="ECO:0007669"/>
    <property type="project" value="UniProtKB-SubCell"/>
</dbReference>
<dbReference type="GO" id="GO:0008200">
    <property type="term" value="F:ion channel inhibitor activity"/>
    <property type="evidence" value="ECO:0007669"/>
    <property type="project" value="InterPro"/>
</dbReference>
<dbReference type="GO" id="GO:0015459">
    <property type="term" value="F:potassium channel regulator activity"/>
    <property type="evidence" value="ECO:0007669"/>
    <property type="project" value="UniProtKB-KW"/>
</dbReference>
<dbReference type="GO" id="GO:0090729">
    <property type="term" value="F:toxin activity"/>
    <property type="evidence" value="ECO:0007669"/>
    <property type="project" value="UniProtKB-KW"/>
</dbReference>
<dbReference type="InterPro" id="IPR036574">
    <property type="entry name" value="Scorpion_toxin-like_sf"/>
</dbReference>
<dbReference type="InterPro" id="IPR008911">
    <property type="entry name" value="Toxin_alpha-KTx_8/9"/>
</dbReference>
<dbReference type="Pfam" id="PF05453">
    <property type="entry name" value="Toxin_6"/>
    <property type="match status" value="1"/>
</dbReference>
<dbReference type="SUPFAM" id="SSF57095">
    <property type="entry name" value="Scorpion toxin-like"/>
    <property type="match status" value="1"/>
</dbReference>
<sequence length="56" mass="6015">MSRLFTLVLIVLAMNVMMAIISDPVVEAVGCEECPMHCKGKNAKPTCDDGVCNCNV</sequence>
<accession>Q9NJP7</accession>
<accession>P58491</accession>
<keyword id="KW-0002">3D-structure</keyword>
<keyword id="KW-1221">Calcium-activated potassium channel impairing toxin</keyword>
<keyword id="KW-0903">Direct protein sequencing</keyword>
<keyword id="KW-1015">Disulfide bond</keyword>
<keyword id="KW-0872">Ion channel impairing toxin</keyword>
<keyword id="KW-0528">Neurotoxin</keyword>
<keyword id="KW-0632">Potassium channel impairing toxin</keyword>
<keyword id="KW-0964">Secreted</keyword>
<keyword id="KW-0732">Signal</keyword>
<keyword id="KW-0800">Toxin</keyword>
<organism>
    <name type="scientific">Olivierus martensii</name>
    <name type="common">Manchurian scorpion</name>
    <name type="synonym">Mesobuthus martensii</name>
    <dbReference type="NCBI Taxonomy" id="34649"/>
    <lineage>
        <taxon>Eukaryota</taxon>
        <taxon>Metazoa</taxon>
        <taxon>Ecdysozoa</taxon>
        <taxon>Arthropoda</taxon>
        <taxon>Chelicerata</taxon>
        <taxon>Arachnida</taxon>
        <taxon>Scorpiones</taxon>
        <taxon>Buthida</taxon>
        <taxon>Buthoidea</taxon>
        <taxon>Buthidae</taxon>
        <taxon>Olivierus</taxon>
    </lineage>
</organism>
<evidence type="ECO:0000269" key="1">
    <source>
    </source>
</evidence>
<evidence type="ECO:0000269" key="2">
    <source>
    </source>
</evidence>
<evidence type="ECO:0000269" key="3">
    <source>
    </source>
</evidence>
<evidence type="ECO:0000303" key="4">
    <source>
    </source>
</evidence>
<evidence type="ECO:0000303" key="5">
    <source>
    </source>
</evidence>
<evidence type="ECO:0000303" key="6">
    <source>
    </source>
</evidence>
<evidence type="ECO:0000303" key="7">
    <source>
    </source>
</evidence>
<evidence type="ECO:0000305" key="8"/>
<evidence type="ECO:0000305" key="9">
    <source>
    </source>
</evidence>
<evidence type="ECO:0000312" key="10">
    <source>
        <dbReference type="EMBL" id="AAP43906.1"/>
    </source>
</evidence>
<evidence type="ECO:0000312" key="11">
    <source>
        <dbReference type="PDB" id="1DU9"/>
    </source>
</evidence>
<evidence type="ECO:0007829" key="12">
    <source>
        <dbReference type="PDB" id="1DU9"/>
    </source>
</evidence>
<protein>
    <recommendedName>
        <fullName evidence="8">Potassium channel toxin alpha-KTx 9.1</fullName>
    </recommendedName>
    <alternativeName>
        <fullName evidence="10">BmKK6</fullName>
        <shortName evidence="10">Toxin Kk6</shortName>
    </alternativeName>
    <alternativeName>
        <fullName evidence="4 5 6 7">Neurotoxin BmP02</fullName>
    </alternativeName>
</protein>
<name>KAX91_OLIMR</name>
<reference key="1">
    <citation type="journal article" date="1999" name="FEBS Lett.">
        <title>Molecular cloning and sequencing of two 'short chain' and two 'long chain' K(+) channel-blocking peptides from the Chinese scorpion Buthus martensii Karsch.</title>
        <authorList>
            <person name="Zhu S.-Y."/>
            <person name="Li W.-X."/>
            <person name="Zeng X.-C."/>
            <person name="Jiang D.-H."/>
            <person name="Mao X."/>
            <person name="Liu H."/>
        </authorList>
    </citation>
    <scope>NUCLEOTIDE SEQUENCE [MRNA]</scope>
    <source>
        <tissue>Venom gland</tissue>
    </source>
</reference>
<reference key="2">
    <citation type="submission" date="1999-05" db="EMBL/GenBank/DDBJ databases">
        <title>Precursor of a potassium-channel inhibitor [named BmKK6] from scorpion Buthus martensii Karsch which is highly homologous with Leiuropeptide I.</title>
        <authorList>
            <person name="Li W.-X."/>
            <person name="Zeng X.-C."/>
            <person name="Zhu S.-Y."/>
        </authorList>
    </citation>
    <scope>NUCLEOTIDE SEQUENCE [MRNA]</scope>
    <source>
        <tissue>Venom gland</tissue>
    </source>
</reference>
<reference key="3">
    <citation type="journal article" date="1997" name="Eur. J. Biochem.">
        <title>Characterization of four toxins from Buthus martensi scorpion venom, which act on apamin-sensitive Ca2+-activated K+ channels.</title>
        <authorList>
            <person name="Romi-Lebrun R."/>
            <person name="Martin-Eauclaire M.-F."/>
            <person name="Escoubas P."/>
            <person name="Wu F.Q."/>
            <person name="Lebrun B."/>
            <person name="Hisada M."/>
            <person name="Nakajima T."/>
        </authorList>
    </citation>
    <scope>PROTEIN SEQUENCE OF 29-56</scope>
    <scope>SUBCELLULAR LOCATION</scope>
    <scope>MASS SPECTROMETRY</scope>
</reference>
<reference key="4">
    <citation type="journal article" date="2012" name="PLoS ONE">
        <title>Structural and functional diversity of acidic scorpion potassium channel toxins.</title>
        <authorList>
            <person name="Chen Z.Y."/>
            <person name="Zeng D.Y."/>
            <person name="Hu Y.T."/>
            <person name="He Y.W."/>
            <person name="Pan N."/>
            <person name="Ding J.P."/>
            <person name="Cao Z.J."/>
            <person name="Liu M.L."/>
            <person name="Li W.X."/>
            <person name="Yi H."/>
            <person name="Jiang L."/>
            <person name="Wu Y.L."/>
        </authorList>
    </citation>
    <scope>FUNCTION ON KV7.1/KCNQ1 CHANNELS</scope>
    <source>
        <tissue>Venom gland</tissue>
    </source>
</reference>
<reference key="5">
    <citation type="journal article" date="2000" name="Biochemistry">
        <title>Solution structure of BmP02, a new potassium channel blocker from the venom of the Chinese scorpion Buthus martensi Karsch.</title>
        <authorList>
            <person name="Xu Y.-Q."/>
            <person name="Wu J.-H."/>
            <person name="Pei J.-M."/>
            <person name="Shi Y.-Y."/>
            <person name="Ji Y.-H."/>
            <person name="Tong Q.-C."/>
        </authorList>
    </citation>
    <scope>STRUCTURE BY NMR OF 29-56</scope>
    <scope>DISULFIDE BONDS</scope>
</reference>
<comment type="function">
    <text evidence="2">Blocks small conductance calcium-activated potassium channels (KCNN, SK). Weakly inhibits the Kv7.1/KCNQ1 channel (10 uM of the toxin inhibits currents by 23.3%). Low toxicity by intracerebroventricular injection into mice.</text>
</comment>
<comment type="subcellular location">
    <subcellularLocation>
        <location evidence="3">Secreted</location>
    </subcellularLocation>
</comment>
<comment type="tissue specificity">
    <text evidence="9">Expressed by the venom gland.</text>
</comment>
<comment type="domain">
    <text evidence="1">Has the structural arrangement of an alpha-helix connected to a beta-sheet by disulfide bonds (CSalpha/beta).</text>
</comment>
<comment type="mass spectrometry" mass="2950.72" method="MALDI" evidence="3"/>
<comment type="similarity">
    <text evidence="8">Belongs to the short scorpion toxin superfamily. Potassium channel inhibitor family. Alpha-KTx 09 subfamily.</text>
</comment>